<accession>Q9BGL8</accession>
<keyword id="KW-1003">Cell membrane</keyword>
<keyword id="KW-1015">Disulfide bond</keyword>
<keyword id="KW-0297">G-protein coupled receptor</keyword>
<keyword id="KW-0325">Glycoprotein</keyword>
<keyword id="KW-0472">Membrane</keyword>
<keyword id="KW-0675">Receptor</keyword>
<keyword id="KW-1185">Reference proteome</keyword>
<keyword id="KW-0807">Transducer</keyword>
<keyword id="KW-0812">Transmembrane</keyword>
<keyword id="KW-1133">Transmembrane helix</keyword>
<evidence type="ECO:0000250" key="1"/>
<evidence type="ECO:0000255" key="2"/>
<evidence type="ECO:0000255" key="3">
    <source>
        <dbReference type="PROSITE-ProRule" id="PRU00521"/>
    </source>
</evidence>
<evidence type="ECO:0000256" key="4">
    <source>
        <dbReference type="SAM" id="MobiDB-lite"/>
    </source>
</evidence>
<proteinExistence type="inferred from homology"/>
<dbReference type="EMBL" id="AF266477">
    <property type="protein sequence ID" value="AAK07512.1"/>
    <property type="molecule type" value="Genomic_DNA"/>
</dbReference>
<dbReference type="SMR" id="Q9BGL8"/>
<dbReference type="FunCoup" id="Q9BGL8">
    <property type="interactions" value="111"/>
</dbReference>
<dbReference type="STRING" id="9615.ENSCAFP00000024002"/>
<dbReference type="GlyCosmos" id="Q9BGL8">
    <property type="glycosylation" value="2 sites, No reported glycans"/>
</dbReference>
<dbReference type="PaxDb" id="9612-ENSCAFP00000024002"/>
<dbReference type="Ensembl" id="ENSCAFT00030013172.1">
    <property type="protein sequence ID" value="ENSCAFP00030011514.1"/>
    <property type="gene ID" value="ENSCAFG00030007187.1"/>
</dbReference>
<dbReference type="eggNOG" id="KOG3656">
    <property type="taxonomic scope" value="Eukaryota"/>
</dbReference>
<dbReference type="InParanoid" id="Q9BGL8"/>
<dbReference type="Reactome" id="R-CFA-391908">
    <property type="pathway name" value="Prostanoid ligand receptors"/>
</dbReference>
<dbReference type="Reactome" id="R-CFA-416476">
    <property type="pathway name" value="G alpha (q) signalling events"/>
</dbReference>
<dbReference type="Proteomes" id="UP000002254">
    <property type="component" value="Unplaced"/>
</dbReference>
<dbReference type="Proteomes" id="UP000694429">
    <property type="component" value="Chromosome 20"/>
</dbReference>
<dbReference type="Proteomes" id="UP000694542">
    <property type="component" value="Unplaced"/>
</dbReference>
<dbReference type="Proteomes" id="UP000805418">
    <property type="component" value="Unplaced"/>
</dbReference>
<dbReference type="GO" id="GO:0005886">
    <property type="term" value="C:plasma membrane"/>
    <property type="evidence" value="ECO:0000318"/>
    <property type="project" value="GO_Central"/>
</dbReference>
<dbReference type="GO" id="GO:0004957">
    <property type="term" value="F:prostaglandin E receptor activity"/>
    <property type="evidence" value="ECO:0000318"/>
    <property type="project" value="GO_Central"/>
</dbReference>
<dbReference type="GO" id="GO:0007189">
    <property type="term" value="P:adenylate cyclase-activating G protein-coupled receptor signaling pathway"/>
    <property type="evidence" value="ECO:0000318"/>
    <property type="project" value="GO_Central"/>
</dbReference>
<dbReference type="GO" id="GO:0006954">
    <property type="term" value="P:inflammatory response"/>
    <property type="evidence" value="ECO:0000318"/>
    <property type="project" value="GO_Central"/>
</dbReference>
<dbReference type="GO" id="GO:0007204">
    <property type="term" value="P:positive regulation of cytosolic calcium ion concentration"/>
    <property type="evidence" value="ECO:0000318"/>
    <property type="project" value="GO_Central"/>
</dbReference>
<dbReference type="FunFam" id="1.20.1070.10:FF:000253">
    <property type="entry name" value="prostaglandin E2 receptor EP1 subtype"/>
    <property type="match status" value="1"/>
</dbReference>
<dbReference type="Gene3D" id="1.20.1070.10">
    <property type="entry name" value="Rhodopsin 7-helix transmembrane proteins"/>
    <property type="match status" value="1"/>
</dbReference>
<dbReference type="InterPro" id="IPR000276">
    <property type="entry name" value="GPCR_Rhodpsn"/>
</dbReference>
<dbReference type="InterPro" id="IPR017452">
    <property type="entry name" value="GPCR_Rhodpsn_7TM"/>
</dbReference>
<dbReference type="InterPro" id="IPR008365">
    <property type="entry name" value="Prostanoid_rcpt"/>
</dbReference>
<dbReference type="InterPro" id="IPR001244">
    <property type="entry name" value="Prostglndn_DP_rcpt"/>
</dbReference>
<dbReference type="InterPro" id="IPR000708">
    <property type="entry name" value="Prostglndn_EP1_rcpt"/>
</dbReference>
<dbReference type="PANTHER" id="PTHR11866">
    <property type="entry name" value="G-PROTEIN COUPLED RECEPTOR FAMILY 1 MEMBER"/>
    <property type="match status" value="1"/>
</dbReference>
<dbReference type="PANTHER" id="PTHR11866:SF3">
    <property type="entry name" value="PROSTAGLANDIN E2 RECEPTOR EP1 SUBTYPE"/>
    <property type="match status" value="1"/>
</dbReference>
<dbReference type="Pfam" id="PF00001">
    <property type="entry name" value="7tm_1"/>
    <property type="match status" value="1"/>
</dbReference>
<dbReference type="PRINTS" id="PR00428">
    <property type="entry name" value="PROSTAGLNDNR"/>
</dbReference>
<dbReference type="PRINTS" id="PR01788">
    <property type="entry name" value="PROSTANOIDR"/>
</dbReference>
<dbReference type="PRINTS" id="PR00580">
    <property type="entry name" value="PRSTNOIDEP1R"/>
</dbReference>
<dbReference type="SUPFAM" id="SSF81321">
    <property type="entry name" value="Family A G protein-coupled receptor-like"/>
    <property type="match status" value="1"/>
</dbReference>
<dbReference type="PROSITE" id="PS00237">
    <property type="entry name" value="G_PROTEIN_RECEP_F1_1"/>
    <property type="match status" value="1"/>
</dbReference>
<dbReference type="PROSITE" id="PS50262">
    <property type="entry name" value="G_PROTEIN_RECEP_F1_2"/>
    <property type="match status" value="1"/>
</dbReference>
<feature type="chain" id="PRO_0000070049" description="Prostaglandin E2 receptor EP1 subtype">
    <location>
        <begin position="1"/>
        <end position="403"/>
    </location>
</feature>
<feature type="topological domain" description="Extracellular" evidence="2">
    <location>
        <begin position="1"/>
        <end position="38"/>
    </location>
</feature>
<feature type="transmembrane region" description="Helical; Name=1" evidence="2">
    <location>
        <begin position="39"/>
        <end position="65"/>
    </location>
</feature>
<feature type="topological domain" description="Cytoplasmic" evidence="2">
    <location>
        <begin position="66"/>
        <end position="75"/>
    </location>
</feature>
<feature type="transmembrane region" description="Helical; Name=2" evidence="2">
    <location>
        <begin position="76"/>
        <end position="99"/>
    </location>
</feature>
<feature type="topological domain" description="Extracellular" evidence="2">
    <location>
        <begin position="100"/>
        <end position="114"/>
    </location>
</feature>
<feature type="transmembrane region" description="Helical; Name=3" evidence="2">
    <location>
        <begin position="115"/>
        <end position="136"/>
    </location>
</feature>
<feature type="topological domain" description="Cytoplasmic" evidence="2">
    <location>
        <begin position="137"/>
        <end position="158"/>
    </location>
</feature>
<feature type="transmembrane region" description="Helical; Name=4" evidence="2">
    <location>
        <begin position="159"/>
        <end position="180"/>
    </location>
</feature>
<feature type="topological domain" description="Extracellular" evidence="2">
    <location>
        <begin position="181"/>
        <end position="204"/>
    </location>
</feature>
<feature type="transmembrane region" description="Helical; Name=5" evidence="2">
    <location>
        <begin position="205"/>
        <end position="230"/>
    </location>
</feature>
<feature type="topological domain" description="Cytoplasmic" evidence="2">
    <location>
        <begin position="231"/>
        <end position="295"/>
    </location>
</feature>
<feature type="transmembrane region" description="Helical; Name=6" evidence="2">
    <location>
        <begin position="296"/>
        <end position="322"/>
    </location>
</feature>
<feature type="topological domain" description="Extracellular" evidence="2">
    <location>
        <begin position="323"/>
        <end position="333"/>
    </location>
</feature>
<feature type="transmembrane region" description="Helical; Name=7" evidence="2">
    <location>
        <begin position="334"/>
        <end position="355"/>
    </location>
</feature>
<feature type="topological domain" description="Cytoplasmic" evidence="2">
    <location>
        <begin position="356"/>
        <end position="403"/>
    </location>
</feature>
<feature type="region of interest" description="Disordered" evidence="4">
    <location>
        <begin position="243"/>
        <end position="287"/>
    </location>
</feature>
<feature type="compositionally biased region" description="Low complexity" evidence="4">
    <location>
        <begin position="259"/>
        <end position="278"/>
    </location>
</feature>
<feature type="glycosylation site" description="N-linked (GlcNAc...) asparagine" evidence="2">
    <location>
        <position position="8"/>
    </location>
</feature>
<feature type="glycosylation site" description="N-linked (GlcNAc...) asparagine" evidence="2">
    <location>
        <position position="25"/>
    </location>
</feature>
<feature type="disulfide bond" evidence="3">
    <location>
        <begin position="113"/>
        <end position="191"/>
    </location>
</feature>
<sequence length="403" mass="42063">MSLCGPLNLSLAGEATPCAEPGAPNASAWPPSGRASASPALPIFSMTLGAVSNVLALALLAQAAGRLRRRRSAATFLLFVASLLATDLAGHVIPGALVLRLYAAGRSPAGGACHFLGGCMVFFGLCPLLLGCGMAVERCVGVTRPLLHAARVSAARARLALAVLAALALAVALLPLARVGRYELQYPGTWCFIGLRPAGGWRQALLAGLFAGLGLAALLAALVCNTLSGLALLRARWRRRRSRRRPQACGPDGRRHWGARAPRSASASSSSSVASVPGGSPGRGSARRARAHDVEMVGQLVGIMVVSCICWSPLLVLVVLAVGGWGSSSLQRPLFLAVRLASWNQILDPWVYILLRQAVLRQLLRLLPPRPGAKGSPAGLALTRSAWEASSLRSSRHSSLSHL</sequence>
<name>PE2R1_CANLF</name>
<protein>
    <recommendedName>
        <fullName>Prostaglandin E2 receptor EP1 subtype</fullName>
        <shortName>PGE receptor EP1 subtype</shortName>
        <shortName>PGE2 receptor EP1 subtype</shortName>
    </recommendedName>
    <alternativeName>
        <fullName>Prostanoid EP1 receptor</fullName>
    </alternativeName>
</protein>
<reference key="1">
    <citation type="submission" date="2000-05" db="EMBL/GenBank/DDBJ databases">
        <title>Cloning of dog EP1 and EP3 prostanoid receptors.</title>
        <authorList>
            <person name="Abramovitz M."/>
            <person name="Bastien L."/>
            <person name="Carriere M.-C."/>
            <person name="Stocco R."/>
        </authorList>
    </citation>
    <scope>NUCLEOTIDE SEQUENCE [GENOMIC DNA]</scope>
</reference>
<organism>
    <name type="scientific">Canis lupus familiaris</name>
    <name type="common">Dog</name>
    <name type="synonym">Canis familiaris</name>
    <dbReference type="NCBI Taxonomy" id="9615"/>
    <lineage>
        <taxon>Eukaryota</taxon>
        <taxon>Metazoa</taxon>
        <taxon>Chordata</taxon>
        <taxon>Craniata</taxon>
        <taxon>Vertebrata</taxon>
        <taxon>Euteleostomi</taxon>
        <taxon>Mammalia</taxon>
        <taxon>Eutheria</taxon>
        <taxon>Laurasiatheria</taxon>
        <taxon>Carnivora</taxon>
        <taxon>Caniformia</taxon>
        <taxon>Canidae</taxon>
        <taxon>Canis</taxon>
    </lineage>
</organism>
<comment type="function">
    <text evidence="1">Receptor for prostaglandin E2 (PGE2). The activity of this receptor is mediated by G(q) proteins which activate a phosphatidylinositol-calcium second messenger system. May play a role as an important modulator of renal function. Implicated the smooth muscle contractile response to PGE2 in various tissues (By similarity).</text>
</comment>
<comment type="subcellular location">
    <subcellularLocation>
        <location>Cell membrane</location>
        <topology>Multi-pass membrane protein</topology>
    </subcellularLocation>
</comment>
<comment type="similarity">
    <text evidence="3">Belongs to the G-protein coupled receptor 1 family.</text>
</comment>
<gene>
    <name type="primary">PTGER1</name>
</gene>